<organism>
    <name type="scientific">Saccharomyces cerevisiae (strain ATCC 204508 / S288c)</name>
    <name type="common">Baker's yeast</name>
    <dbReference type="NCBI Taxonomy" id="559292"/>
    <lineage>
        <taxon>Eukaryota</taxon>
        <taxon>Fungi</taxon>
        <taxon>Dikarya</taxon>
        <taxon>Ascomycota</taxon>
        <taxon>Saccharomycotina</taxon>
        <taxon>Saccharomycetes</taxon>
        <taxon>Saccharomycetales</taxon>
        <taxon>Saccharomycetaceae</taxon>
        <taxon>Saccharomyces</taxon>
    </lineage>
</organism>
<name>SMK1_YEAST</name>
<feature type="chain" id="PRO_0000186339" description="Sporulation-specific mitogen-activated protein kinase SMK1">
    <location>
        <begin position="1"/>
        <end position="388"/>
    </location>
</feature>
<feature type="domain" description="Protein kinase" evidence="2">
    <location>
        <begin position="38"/>
        <end position="337"/>
    </location>
</feature>
<feature type="short sequence motif" description="TXY">
    <location>
        <begin position="207"/>
        <end position="209"/>
    </location>
</feature>
<feature type="active site" description="Proton acceptor" evidence="2 3">
    <location>
        <position position="166"/>
    </location>
</feature>
<feature type="binding site" evidence="2">
    <location>
        <begin position="44"/>
        <end position="52"/>
    </location>
    <ligand>
        <name>ATP</name>
        <dbReference type="ChEBI" id="CHEBI:30616"/>
    </ligand>
</feature>
<feature type="binding site" evidence="2">
    <location>
        <position position="69"/>
    </location>
    <ligand>
        <name>ATP</name>
        <dbReference type="ChEBI" id="CHEBI:30616"/>
    </ligand>
</feature>
<gene>
    <name type="primary">SMK1</name>
    <name type="ordered locus">YPR054W</name>
    <name type="ORF">YP9499.10</name>
</gene>
<dbReference type="EC" id="2.7.11.24"/>
<dbReference type="EMBL" id="L35047">
    <property type="protein sequence ID" value="AAB59325.1"/>
    <property type="molecule type" value="Genomic_DNA"/>
</dbReference>
<dbReference type="EMBL" id="Z49219">
    <property type="protein sequence ID" value="CAA89172.1"/>
    <property type="molecule type" value="Genomic_DNA"/>
</dbReference>
<dbReference type="EMBL" id="Z71255">
    <property type="protein sequence ID" value="CAA94999.1"/>
    <property type="molecule type" value="Genomic_DNA"/>
</dbReference>
<dbReference type="EMBL" id="BK006949">
    <property type="protein sequence ID" value="DAA11476.1"/>
    <property type="molecule type" value="Genomic_DNA"/>
</dbReference>
<dbReference type="PIR" id="S48879">
    <property type="entry name" value="S48879"/>
</dbReference>
<dbReference type="RefSeq" id="NP_015379.1">
    <property type="nucleotide sequence ID" value="NM_001184151.1"/>
</dbReference>
<dbReference type="SMR" id="P41808"/>
<dbReference type="BioGRID" id="36228">
    <property type="interactions" value="66"/>
</dbReference>
<dbReference type="DIP" id="DIP-1636N"/>
<dbReference type="FunCoup" id="P41808">
    <property type="interactions" value="438"/>
</dbReference>
<dbReference type="IntAct" id="P41808">
    <property type="interactions" value="24"/>
</dbReference>
<dbReference type="MINT" id="P41808"/>
<dbReference type="STRING" id="4932.YPR054W"/>
<dbReference type="iPTMnet" id="P41808"/>
<dbReference type="PaxDb" id="4932-YPR054W"/>
<dbReference type="PeptideAtlas" id="P41808"/>
<dbReference type="EnsemblFungi" id="YPR054W_mRNA">
    <property type="protein sequence ID" value="YPR054W"/>
    <property type="gene ID" value="YPR054W"/>
</dbReference>
<dbReference type="GeneID" id="856167"/>
<dbReference type="KEGG" id="sce:YPR054W"/>
<dbReference type="AGR" id="SGD:S000006258"/>
<dbReference type="SGD" id="S000006258">
    <property type="gene designation" value="SMK1"/>
</dbReference>
<dbReference type="VEuPathDB" id="FungiDB:YPR054W"/>
<dbReference type="eggNOG" id="KOG0660">
    <property type="taxonomic scope" value="Eukaryota"/>
</dbReference>
<dbReference type="HOGENOM" id="CLU_000288_181_1_1"/>
<dbReference type="InParanoid" id="P41808"/>
<dbReference type="OMA" id="GLYCFQE"/>
<dbReference type="OrthoDB" id="192887at2759"/>
<dbReference type="BioCyc" id="YEAST:G3O-34206-MONOMER"/>
<dbReference type="BRENDA" id="2.7.11.24">
    <property type="organism ID" value="984"/>
</dbReference>
<dbReference type="Reactome" id="R-SCE-110056">
    <property type="pathway name" value="MAPK3 (ERK1) activation"/>
</dbReference>
<dbReference type="Reactome" id="R-SCE-111995">
    <property type="pathway name" value="phospho-PLA2 pathway"/>
</dbReference>
<dbReference type="Reactome" id="R-SCE-112409">
    <property type="pathway name" value="RAF-independent MAPK1/3 activation"/>
</dbReference>
<dbReference type="Reactome" id="R-SCE-112411">
    <property type="pathway name" value="MAPK1 (ERK2) activation"/>
</dbReference>
<dbReference type="Reactome" id="R-SCE-170968">
    <property type="pathway name" value="Frs2-mediated activation"/>
</dbReference>
<dbReference type="Reactome" id="R-SCE-198753">
    <property type="pathway name" value="ERK/MAPK targets"/>
</dbReference>
<dbReference type="Reactome" id="R-SCE-202670">
    <property type="pathway name" value="ERKs are inactivated"/>
</dbReference>
<dbReference type="Reactome" id="R-SCE-2559582">
    <property type="pathway name" value="Senescence-Associated Secretory Phenotype (SASP)"/>
</dbReference>
<dbReference type="Reactome" id="R-SCE-3371453">
    <property type="pathway name" value="Regulation of HSF1-mediated heat shock response"/>
</dbReference>
<dbReference type="Reactome" id="R-SCE-375165">
    <property type="pathway name" value="NCAM signaling for neurite out-growth"/>
</dbReference>
<dbReference type="Reactome" id="R-SCE-4086398">
    <property type="pathway name" value="Ca2+ pathway"/>
</dbReference>
<dbReference type="Reactome" id="R-SCE-437239">
    <property type="pathway name" value="Recycling pathway of L1"/>
</dbReference>
<dbReference type="Reactome" id="R-SCE-445144">
    <property type="pathway name" value="Signal transduction by L1"/>
</dbReference>
<dbReference type="Reactome" id="R-SCE-450341">
    <property type="pathway name" value="Activation of the AP-1 family of transcription factors"/>
</dbReference>
<dbReference type="Reactome" id="R-SCE-5673001">
    <property type="pathway name" value="RAF/MAP kinase cascade"/>
</dbReference>
<dbReference type="Reactome" id="R-SCE-5674135">
    <property type="pathway name" value="MAP2K and MAPK activation"/>
</dbReference>
<dbReference type="Reactome" id="R-SCE-5674499">
    <property type="pathway name" value="Negative feedback regulation of MAPK pathway"/>
</dbReference>
<dbReference type="Reactome" id="R-SCE-5675221">
    <property type="pathway name" value="Negative regulation of MAPK pathway"/>
</dbReference>
<dbReference type="Reactome" id="R-SCE-5687128">
    <property type="pathway name" value="MAPK6/MAPK4 signaling"/>
</dbReference>
<dbReference type="Reactome" id="R-SCE-6798695">
    <property type="pathway name" value="Neutrophil degranulation"/>
</dbReference>
<dbReference type="Reactome" id="R-SCE-881907">
    <property type="pathway name" value="Gastrin-CREB signalling pathway via PKC and MAPK"/>
</dbReference>
<dbReference type="Reactome" id="R-SCE-9634635">
    <property type="pathway name" value="Estrogen-stimulated signaling through PRKCZ"/>
</dbReference>
<dbReference type="Reactome" id="R-SCE-9856649">
    <property type="pathway name" value="Transcriptional and post-translational regulation of MITF-M expression and activity"/>
</dbReference>
<dbReference type="BioGRID-ORCS" id="856167">
    <property type="hits" value="0 hits in 13 CRISPR screens"/>
</dbReference>
<dbReference type="PRO" id="PR:P41808"/>
<dbReference type="Proteomes" id="UP000002311">
    <property type="component" value="Chromosome XVI"/>
</dbReference>
<dbReference type="RNAct" id="P41808">
    <property type="molecule type" value="protein"/>
</dbReference>
<dbReference type="GO" id="GO:0005737">
    <property type="term" value="C:cytoplasm"/>
    <property type="evidence" value="ECO:0000318"/>
    <property type="project" value="GO_Central"/>
</dbReference>
<dbReference type="GO" id="GO:0005739">
    <property type="term" value="C:mitochondrion"/>
    <property type="evidence" value="ECO:0007005"/>
    <property type="project" value="SGD"/>
</dbReference>
<dbReference type="GO" id="GO:0005634">
    <property type="term" value="C:nucleus"/>
    <property type="evidence" value="ECO:0000318"/>
    <property type="project" value="GO_Central"/>
</dbReference>
<dbReference type="GO" id="GO:0070056">
    <property type="term" value="C:prospore membrane leading edge"/>
    <property type="evidence" value="ECO:0000314"/>
    <property type="project" value="SGD"/>
</dbReference>
<dbReference type="GO" id="GO:0005524">
    <property type="term" value="F:ATP binding"/>
    <property type="evidence" value="ECO:0007669"/>
    <property type="project" value="UniProtKB-KW"/>
</dbReference>
<dbReference type="GO" id="GO:0004707">
    <property type="term" value="F:MAP kinase activity"/>
    <property type="evidence" value="ECO:0000314"/>
    <property type="project" value="SGD"/>
</dbReference>
<dbReference type="GO" id="GO:0106310">
    <property type="term" value="F:protein serine kinase activity"/>
    <property type="evidence" value="ECO:0007669"/>
    <property type="project" value="RHEA"/>
</dbReference>
<dbReference type="GO" id="GO:0030476">
    <property type="term" value="P:ascospore wall assembly"/>
    <property type="evidence" value="ECO:0000315"/>
    <property type="project" value="SGD"/>
</dbReference>
<dbReference type="GO" id="GO:0035556">
    <property type="term" value="P:intracellular signal transduction"/>
    <property type="evidence" value="ECO:0000318"/>
    <property type="project" value="GO_Central"/>
</dbReference>
<dbReference type="GO" id="GO:1904853">
    <property type="term" value="P:protein localization to ascospore wall"/>
    <property type="evidence" value="ECO:0000315"/>
    <property type="project" value="SGD"/>
</dbReference>
<dbReference type="GO" id="GO:0008360">
    <property type="term" value="P:regulation of cell shape"/>
    <property type="evidence" value="ECO:0007669"/>
    <property type="project" value="UniProtKB-KW"/>
</dbReference>
<dbReference type="FunFam" id="1.10.510.10:FF:000040">
    <property type="entry name" value="Mitogen-activated protein kinase"/>
    <property type="match status" value="1"/>
</dbReference>
<dbReference type="Gene3D" id="3.30.200.20">
    <property type="entry name" value="Phosphorylase Kinase, domain 1"/>
    <property type="match status" value="1"/>
</dbReference>
<dbReference type="Gene3D" id="1.10.510.10">
    <property type="entry name" value="Transferase(Phosphotransferase) domain 1"/>
    <property type="match status" value="1"/>
</dbReference>
<dbReference type="InterPro" id="IPR011009">
    <property type="entry name" value="Kinase-like_dom_sf"/>
</dbReference>
<dbReference type="InterPro" id="IPR050117">
    <property type="entry name" value="MAP_kinase"/>
</dbReference>
<dbReference type="InterPro" id="IPR000719">
    <property type="entry name" value="Prot_kinase_dom"/>
</dbReference>
<dbReference type="InterPro" id="IPR017441">
    <property type="entry name" value="Protein_kinase_ATP_BS"/>
</dbReference>
<dbReference type="InterPro" id="IPR008271">
    <property type="entry name" value="Ser/Thr_kinase_AS"/>
</dbReference>
<dbReference type="PANTHER" id="PTHR24055">
    <property type="entry name" value="MITOGEN-ACTIVATED PROTEIN KINASE"/>
    <property type="match status" value="1"/>
</dbReference>
<dbReference type="Pfam" id="PF00069">
    <property type="entry name" value="Pkinase"/>
    <property type="match status" value="1"/>
</dbReference>
<dbReference type="SMART" id="SM00220">
    <property type="entry name" value="S_TKc"/>
    <property type="match status" value="1"/>
</dbReference>
<dbReference type="SUPFAM" id="SSF56112">
    <property type="entry name" value="Protein kinase-like (PK-like)"/>
    <property type="match status" value="1"/>
</dbReference>
<dbReference type="PROSITE" id="PS00107">
    <property type="entry name" value="PROTEIN_KINASE_ATP"/>
    <property type="match status" value="1"/>
</dbReference>
<dbReference type="PROSITE" id="PS50011">
    <property type="entry name" value="PROTEIN_KINASE_DOM"/>
    <property type="match status" value="1"/>
</dbReference>
<dbReference type="PROSITE" id="PS00108">
    <property type="entry name" value="PROTEIN_KINASE_ST"/>
    <property type="match status" value="1"/>
</dbReference>
<keyword id="KW-0067">ATP-binding</keyword>
<keyword id="KW-0133">Cell shape</keyword>
<keyword id="KW-0961">Cell wall biogenesis/degradation</keyword>
<keyword id="KW-0418">Kinase</keyword>
<keyword id="KW-0547">Nucleotide-binding</keyword>
<keyword id="KW-0597">Phosphoprotein</keyword>
<keyword id="KW-1185">Reference proteome</keyword>
<keyword id="KW-0723">Serine/threonine-protein kinase</keyword>
<keyword id="KW-0749">Sporulation</keyword>
<keyword id="KW-0808">Transferase</keyword>
<reference key="1">
    <citation type="journal article" date="1994" name="Genes Dev.">
        <title>SMK1, a developmentally regulated MAP kinase, is required for spore wall assembly in Saccharomyces cerevisiae.</title>
        <authorList>
            <person name="Krisak L."/>
            <person name="Strich R."/>
            <person name="Winters R.S."/>
            <person name="Hall J.P."/>
            <person name="Mallory M.J."/>
            <person name="Kreitzer D."/>
            <person name="Tuan R.S."/>
            <person name="Winter E."/>
        </authorList>
    </citation>
    <scope>NUCLEOTIDE SEQUENCE [GENOMIC DNA]</scope>
    <scope>FUNCTION</scope>
    <source>
        <strain>ATCC 204508 / S288c</strain>
    </source>
</reference>
<reference key="2">
    <citation type="journal article" date="1997" name="Nature">
        <title>The nucleotide sequence of Saccharomyces cerevisiae chromosome XVI.</title>
        <authorList>
            <person name="Bussey H."/>
            <person name="Storms R.K."/>
            <person name="Ahmed A."/>
            <person name="Albermann K."/>
            <person name="Allen E."/>
            <person name="Ansorge W."/>
            <person name="Araujo R."/>
            <person name="Aparicio A."/>
            <person name="Barrell B.G."/>
            <person name="Badcock K."/>
            <person name="Benes V."/>
            <person name="Botstein D."/>
            <person name="Bowman S."/>
            <person name="Brueckner M."/>
            <person name="Carpenter J."/>
            <person name="Cherry J.M."/>
            <person name="Chung E."/>
            <person name="Churcher C.M."/>
            <person name="Coster F."/>
            <person name="Davis K."/>
            <person name="Davis R.W."/>
            <person name="Dietrich F.S."/>
            <person name="Delius H."/>
            <person name="DiPaolo T."/>
            <person name="Dubois E."/>
            <person name="Duesterhoeft A."/>
            <person name="Duncan M."/>
            <person name="Floeth M."/>
            <person name="Fortin N."/>
            <person name="Friesen J.D."/>
            <person name="Fritz C."/>
            <person name="Goffeau A."/>
            <person name="Hall J."/>
            <person name="Hebling U."/>
            <person name="Heumann K."/>
            <person name="Hilbert H."/>
            <person name="Hillier L.W."/>
            <person name="Hunicke-Smith S."/>
            <person name="Hyman R.W."/>
            <person name="Johnston M."/>
            <person name="Kalman S."/>
            <person name="Kleine K."/>
            <person name="Komp C."/>
            <person name="Kurdi O."/>
            <person name="Lashkari D."/>
            <person name="Lew H."/>
            <person name="Lin A."/>
            <person name="Lin D."/>
            <person name="Louis E.J."/>
            <person name="Marathe R."/>
            <person name="Messenguy F."/>
            <person name="Mewes H.-W."/>
            <person name="Mirtipati S."/>
            <person name="Moestl D."/>
            <person name="Mueller-Auer S."/>
            <person name="Namath A."/>
            <person name="Nentwich U."/>
            <person name="Oefner P."/>
            <person name="Pearson D."/>
            <person name="Petel F.X."/>
            <person name="Pohl T.M."/>
            <person name="Purnelle B."/>
            <person name="Rajandream M.A."/>
            <person name="Rechmann S."/>
            <person name="Rieger M."/>
            <person name="Riles L."/>
            <person name="Roberts D."/>
            <person name="Schaefer M."/>
            <person name="Scharfe M."/>
            <person name="Scherens B."/>
            <person name="Schramm S."/>
            <person name="Schroeder M."/>
            <person name="Sdicu A.-M."/>
            <person name="Tettelin H."/>
            <person name="Urrestarazu L.A."/>
            <person name="Ushinsky S."/>
            <person name="Vierendeels F."/>
            <person name="Vissers S."/>
            <person name="Voss H."/>
            <person name="Walsh S.V."/>
            <person name="Wambutt R."/>
            <person name="Wang Y."/>
            <person name="Wedler E."/>
            <person name="Wedler H."/>
            <person name="Winnett E."/>
            <person name="Zhong W.-W."/>
            <person name="Zollner A."/>
            <person name="Vo D.H."/>
            <person name="Hani J."/>
        </authorList>
    </citation>
    <scope>NUCLEOTIDE SEQUENCE [LARGE SCALE GENOMIC DNA]</scope>
    <source>
        <strain>ATCC 204508 / S288c</strain>
    </source>
</reference>
<reference key="3">
    <citation type="journal article" date="2014" name="G3 (Bethesda)">
        <title>The reference genome sequence of Saccharomyces cerevisiae: Then and now.</title>
        <authorList>
            <person name="Engel S.R."/>
            <person name="Dietrich F.S."/>
            <person name="Fisk D.G."/>
            <person name="Binkley G."/>
            <person name="Balakrishnan R."/>
            <person name="Costanzo M.C."/>
            <person name="Dwight S.S."/>
            <person name="Hitz B.C."/>
            <person name="Karra K."/>
            <person name="Nash R.S."/>
            <person name="Weng S."/>
            <person name="Wong E.D."/>
            <person name="Lloyd P."/>
            <person name="Skrzypek M.S."/>
            <person name="Miyasato S.R."/>
            <person name="Simison M."/>
            <person name="Cherry J.M."/>
        </authorList>
    </citation>
    <scope>GENOME REANNOTATION</scope>
    <source>
        <strain>ATCC 204508 / S288c</strain>
    </source>
</reference>
<reference key="4">
    <citation type="journal article" date="2005" name="Proc. Natl. Acad. Sci. U.S.A.">
        <title>The Smk1p MAP kinase negatively regulates Gsc2p, a 1,3-beta-glucan synthase, during spore wall morphogenesis in Saccharomyces cerevisiae.</title>
        <authorList>
            <person name="Huang L.S."/>
            <person name="Doherty H.K."/>
            <person name="Herskowitz I."/>
        </authorList>
    </citation>
    <scope>FUNCTION</scope>
    <scope>INTERACTION WITH GSC2</scope>
</reference>
<proteinExistence type="evidence at protein level"/>
<comment type="function">
    <text evidence="4 5">Required for spore wall assembly. Required for proper deposition of the two outer layers of the spore wall, the chitosan and dityrosine layers. Negatively regulates GSC2, an alternate catalytic subunit of the 1,3-beta-glucan synthase (GS). Participates in a developmentally regulated signal transduction pathway that coordinates cytodifferentiation events with the transcriptional program.</text>
</comment>
<comment type="catalytic activity">
    <reaction>
        <text>L-seryl-[protein] + ATP = O-phospho-L-seryl-[protein] + ADP + H(+)</text>
        <dbReference type="Rhea" id="RHEA:17989"/>
        <dbReference type="Rhea" id="RHEA-COMP:9863"/>
        <dbReference type="Rhea" id="RHEA-COMP:11604"/>
        <dbReference type="ChEBI" id="CHEBI:15378"/>
        <dbReference type="ChEBI" id="CHEBI:29999"/>
        <dbReference type="ChEBI" id="CHEBI:30616"/>
        <dbReference type="ChEBI" id="CHEBI:83421"/>
        <dbReference type="ChEBI" id="CHEBI:456216"/>
        <dbReference type="EC" id="2.7.11.24"/>
    </reaction>
</comment>
<comment type="catalytic activity">
    <reaction>
        <text>L-threonyl-[protein] + ATP = O-phospho-L-threonyl-[protein] + ADP + H(+)</text>
        <dbReference type="Rhea" id="RHEA:46608"/>
        <dbReference type="Rhea" id="RHEA-COMP:11060"/>
        <dbReference type="Rhea" id="RHEA-COMP:11605"/>
        <dbReference type="ChEBI" id="CHEBI:15378"/>
        <dbReference type="ChEBI" id="CHEBI:30013"/>
        <dbReference type="ChEBI" id="CHEBI:30616"/>
        <dbReference type="ChEBI" id="CHEBI:61977"/>
        <dbReference type="ChEBI" id="CHEBI:456216"/>
        <dbReference type="EC" id="2.7.11.24"/>
    </reaction>
</comment>
<comment type="cofactor">
    <cofactor evidence="1">
        <name>Mg(2+)</name>
        <dbReference type="ChEBI" id="CHEBI:18420"/>
    </cofactor>
</comment>
<comment type="activity regulation">
    <text evidence="1">Activated by tyrosine and threonine phosphorylation.</text>
</comment>
<comment type="subunit">
    <text evidence="4">Interacts with GSC2.</text>
</comment>
<comment type="interaction">
    <interactant intactId="EBI-17457">
        <id>P41808</id>
    </interactant>
    <interactant intactId="EBI-8659">
        <id>P02829</id>
        <label>HSP82</label>
    </interactant>
    <organismsDiffer>false</organismsDiffer>
    <experiments>3</experiments>
</comment>
<comment type="domain">
    <text>The TXY motif contains the threonine and tyrosine residues whose phosphorylation activates the MAP kinases.</text>
</comment>
<comment type="PTM">
    <text evidence="1">Dually phosphorylated on Thr-207 and Tyr-209, which activates the enzyme.</text>
</comment>
<comment type="similarity">
    <text evidence="6">Belongs to the protein kinase superfamily. CMGC Ser/Thr protein kinase family. MAP kinase subfamily.</text>
</comment>
<accession>P41808</accession>
<accession>D6W460</accession>
<sequence length="388" mass="44300">MNCTLTDNTRAINVASNLGAPQQRTIFAKERISIPGYYEIIQFLGKGAYGTVCSVKFKGRSPAARIAVKKISNIFNKEILLKRAIRELKFMNFFKGHKNIVNLIDLEIVTSSPYDGLYCYQELIDYDLAKVIHSSVQLSEFHIKYFLYQILCGLKYIHSADVIHRDLKPGNILCTLNGCLKICDFGLARGIHAGFFKCHSTVQPHITNYVATRWYRAPELLLSNQPYSKSVDIWAVGCILAEFYARKPVFMGRDSMHQIFEIIKVLGTPDKDILIKFGTIKAWNLGKNSNNPVYKKIPWSNIFPFASHEAINLIESLLHWDSTHRLNVEQAISHPFLNEVRKPDDEPVCLQGPFDFTYESELNSMSKLRDYLVEEVKNFKTDLSSSSL</sequence>
<protein>
    <recommendedName>
        <fullName>Sporulation-specific mitogen-activated protein kinase SMK1</fullName>
        <shortName>MAP kinase SMK1</shortName>
        <ecNumber>2.7.11.24</ecNumber>
    </recommendedName>
</protein>
<evidence type="ECO:0000250" key="1"/>
<evidence type="ECO:0000255" key="2">
    <source>
        <dbReference type="PROSITE-ProRule" id="PRU00159"/>
    </source>
</evidence>
<evidence type="ECO:0000255" key="3">
    <source>
        <dbReference type="PROSITE-ProRule" id="PRU10027"/>
    </source>
</evidence>
<evidence type="ECO:0000269" key="4">
    <source>
    </source>
</evidence>
<evidence type="ECO:0000269" key="5">
    <source>
    </source>
</evidence>
<evidence type="ECO:0000305" key="6"/>